<keyword id="KW-0665">Pyrimidine biosynthesis</keyword>
<keyword id="KW-1185">Reference proteome</keyword>
<keyword id="KW-0808">Transferase</keyword>
<sequence length="334" mass="36344">MTPIDAKRPLQLNDQGQLRHFLSLDGLPRELLTEILDTADSFLEVGARAVKKVPLLRGKTVCNVFFENSTRTRTTFELAAQRLSADVISLNVSTSSTSKGETLFDTLRNLEAMAADMFVVRHSDSGAAHFIAEHVCPEVAVINGGDGRHAHPTQGMLDMLTIRRHKGSFENLSVAIVGDILHSRVARSDMLALKALGCPDIRVIGPKTLIPIGIEQYGVKVYTDLAEGLKDVDVVIMLRLQRERMAGGLLPSEGEFYRLFGLTTARLAGAKPDAIVMHPGPINRGVEIESAVADGKHSVILNQVTYGIAVRMAVLSMAMSGQNAQRQLDQENAQ</sequence>
<comment type="function">
    <text evidence="1">Catalyzes the condensation of carbamoyl phosphate and aspartate to form carbamoyl aspartate and inorganic phosphate, the committed step in the de novo pyrimidine nucleotide biosynthesis pathway.</text>
</comment>
<comment type="catalytic activity">
    <reaction evidence="1">
        <text>carbamoyl phosphate + L-aspartate = N-carbamoyl-L-aspartate + phosphate + H(+)</text>
        <dbReference type="Rhea" id="RHEA:20013"/>
        <dbReference type="ChEBI" id="CHEBI:15378"/>
        <dbReference type="ChEBI" id="CHEBI:29991"/>
        <dbReference type="ChEBI" id="CHEBI:32814"/>
        <dbReference type="ChEBI" id="CHEBI:43474"/>
        <dbReference type="ChEBI" id="CHEBI:58228"/>
        <dbReference type="EC" id="2.1.3.2"/>
    </reaction>
</comment>
<comment type="pathway">
    <text evidence="1">Pyrimidine metabolism; UMP biosynthesis via de novo pathway; (S)-dihydroorotate from bicarbonate: step 2/3.</text>
</comment>
<comment type="subunit">
    <text evidence="1">Heterododecamer (2C3:3R2) of six catalytic PyrB chains organized as two trimers (C3), and six regulatory PyrI chains organized as three dimers (R2).</text>
</comment>
<comment type="similarity">
    <text evidence="1">Belongs to the aspartate/ornithine carbamoyltransferase superfamily. ATCase family.</text>
</comment>
<dbReference type="EC" id="2.1.3.2" evidence="1"/>
<dbReference type="EMBL" id="AE015451">
    <property type="protein sequence ID" value="AAN70564.1"/>
    <property type="molecule type" value="Genomic_DNA"/>
</dbReference>
<dbReference type="RefSeq" id="NP_747100.1">
    <property type="nucleotide sequence ID" value="NC_002947.4"/>
</dbReference>
<dbReference type="RefSeq" id="WP_003249311.1">
    <property type="nucleotide sequence ID" value="NZ_CP169744.1"/>
</dbReference>
<dbReference type="SMR" id="Q88D30"/>
<dbReference type="STRING" id="160488.PP_4998"/>
<dbReference type="PaxDb" id="160488-PP_4998"/>
<dbReference type="KEGG" id="ppu:PP_4998"/>
<dbReference type="PATRIC" id="fig|160488.4.peg.5339"/>
<dbReference type="eggNOG" id="COG0540">
    <property type="taxonomic scope" value="Bacteria"/>
</dbReference>
<dbReference type="HOGENOM" id="CLU_043846_2_0_6"/>
<dbReference type="OrthoDB" id="9774690at2"/>
<dbReference type="PhylomeDB" id="Q88D30"/>
<dbReference type="BioCyc" id="PPUT160488:G1G01-5343-MONOMER"/>
<dbReference type="UniPathway" id="UPA00070">
    <property type="reaction ID" value="UER00116"/>
</dbReference>
<dbReference type="Proteomes" id="UP000000556">
    <property type="component" value="Chromosome"/>
</dbReference>
<dbReference type="GO" id="GO:0005829">
    <property type="term" value="C:cytosol"/>
    <property type="evidence" value="ECO:0007669"/>
    <property type="project" value="TreeGrafter"/>
</dbReference>
<dbReference type="GO" id="GO:0016597">
    <property type="term" value="F:amino acid binding"/>
    <property type="evidence" value="ECO:0007669"/>
    <property type="project" value="InterPro"/>
</dbReference>
<dbReference type="GO" id="GO:0004070">
    <property type="term" value="F:aspartate carbamoyltransferase activity"/>
    <property type="evidence" value="ECO:0007669"/>
    <property type="project" value="UniProtKB-UniRule"/>
</dbReference>
<dbReference type="GO" id="GO:0006207">
    <property type="term" value="P:'de novo' pyrimidine nucleobase biosynthetic process"/>
    <property type="evidence" value="ECO:0007669"/>
    <property type="project" value="InterPro"/>
</dbReference>
<dbReference type="GO" id="GO:0044205">
    <property type="term" value="P:'de novo' UMP biosynthetic process"/>
    <property type="evidence" value="ECO:0007669"/>
    <property type="project" value="UniProtKB-UniRule"/>
</dbReference>
<dbReference type="GO" id="GO:0006520">
    <property type="term" value="P:amino acid metabolic process"/>
    <property type="evidence" value="ECO:0007669"/>
    <property type="project" value="InterPro"/>
</dbReference>
<dbReference type="FunFam" id="3.40.50.1370:FF:000006">
    <property type="entry name" value="Aspartate carbamoyltransferase"/>
    <property type="match status" value="1"/>
</dbReference>
<dbReference type="FunFam" id="3.40.50.1370:FF:000007">
    <property type="entry name" value="Aspartate carbamoyltransferase"/>
    <property type="match status" value="1"/>
</dbReference>
<dbReference type="Gene3D" id="3.40.50.1370">
    <property type="entry name" value="Aspartate/ornithine carbamoyltransferase"/>
    <property type="match status" value="2"/>
</dbReference>
<dbReference type="HAMAP" id="MF_00001">
    <property type="entry name" value="Asp_carb_tr"/>
    <property type="match status" value="1"/>
</dbReference>
<dbReference type="InterPro" id="IPR006132">
    <property type="entry name" value="Asp/Orn_carbamoyltranf_P-bd"/>
</dbReference>
<dbReference type="InterPro" id="IPR006130">
    <property type="entry name" value="Asp/Orn_carbamoylTrfase"/>
</dbReference>
<dbReference type="InterPro" id="IPR036901">
    <property type="entry name" value="Asp/Orn_carbamoylTrfase_sf"/>
</dbReference>
<dbReference type="InterPro" id="IPR002082">
    <property type="entry name" value="Asp_carbamoyltransf"/>
</dbReference>
<dbReference type="InterPro" id="IPR006131">
    <property type="entry name" value="Asp_carbamoyltransf_Asp/Orn-bd"/>
</dbReference>
<dbReference type="NCBIfam" id="TIGR00670">
    <property type="entry name" value="asp_carb_tr"/>
    <property type="match status" value="1"/>
</dbReference>
<dbReference type="NCBIfam" id="NF002032">
    <property type="entry name" value="PRK00856.1"/>
    <property type="match status" value="1"/>
</dbReference>
<dbReference type="PANTHER" id="PTHR45753:SF6">
    <property type="entry name" value="ASPARTATE CARBAMOYLTRANSFERASE"/>
    <property type="match status" value="1"/>
</dbReference>
<dbReference type="PANTHER" id="PTHR45753">
    <property type="entry name" value="ORNITHINE CARBAMOYLTRANSFERASE, MITOCHONDRIAL"/>
    <property type="match status" value="1"/>
</dbReference>
<dbReference type="Pfam" id="PF00185">
    <property type="entry name" value="OTCace"/>
    <property type="match status" value="1"/>
</dbReference>
<dbReference type="Pfam" id="PF02729">
    <property type="entry name" value="OTCace_N"/>
    <property type="match status" value="1"/>
</dbReference>
<dbReference type="PRINTS" id="PR00100">
    <property type="entry name" value="AOTCASE"/>
</dbReference>
<dbReference type="PRINTS" id="PR00101">
    <property type="entry name" value="ATCASE"/>
</dbReference>
<dbReference type="SUPFAM" id="SSF53671">
    <property type="entry name" value="Aspartate/ornithine carbamoyltransferase"/>
    <property type="match status" value="1"/>
</dbReference>
<dbReference type="PROSITE" id="PS00097">
    <property type="entry name" value="CARBAMOYLTRANSFERASE"/>
    <property type="match status" value="1"/>
</dbReference>
<proteinExistence type="inferred from homology"/>
<reference key="1">
    <citation type="journal article" date="2002" name="Environ. Microbiol.">
        <title>Complete genome sequence and comparative analysis of the metabolically versatile Pseudomonas putida KT2440.</title>
        <authorList>
            <person name="Nelson K.E."/>
            <person name="Weinel C."/>
            <person name="Paulsen I.T."/>
            <person name="Dodson R.J."/>
            <person name="Hilbert H."/>
            <person name="Martins dos Santos V.A.P."/>
            <person name="Fouts D.E."/>
            <person name="Gill S.R."/>
            <person name="Pop M."/>
            <person name="Holmes M."/>
            <person name="Brinkac L.M."/>
            <person name="Beanan M.J."/>
            <person name="DeBoy R.T."/>
            <person name="Daugherty S.C."/>
            <person name="Kolonay J.F."/>
            <person name="Madupu R."/>
            <person name="Nelson W.C."/>
            <person name="White O."/>
            <person name="Peterson J.D."/>
            <person name="Khouri H.M."/>
            <person name="Hance I."/>
            <person name="Chris Lee P."/>
            <person name="Holtzapple E.K."/>
            <person name="Scanlan D."/>
            <person name="Tran K."/>
            <person name="Moazzez A."/>
            <person name="Utterback T.R."/>
            <person name="Rizzo M."/>
            <person name="Lee K."/>
            <person name="Kosack D."/>
            <person name="Moestl D."/>
            <person name="Wedler H."/>
            <person name="Lauber J."/>
            <person name="Stjepandic D."/>
            <person name="Hoheisel J."/>
            <person name="Straetz M."/>
            <person name="Heim S."/>
            <person name="Kiewitz C."/>
            <person name="Eisen J.A."/>
            <person name="Timmis K.N."/>
            <person name="Duesterhoeft A."/>
            <person name="Tuemmler B."/>
            <person name="Fraser C.M."/>
        </authorList>
    </citation>
    <scope>NUCLEOTIDE SEQUENCE [LARGE SCALE GENOMIC DNA]</scope>
    <source>
        <strain>ATCC 47054 / DSM 6125 / CFBP 8728 / NCIMB 11950 / KT2440</strain>
    </source>
</reference>
<accession>Q88D30</accession>
<gene>
    <name evidence="1" type="primary">pyrB</name>
    <name type="ordered locus">PP_4998</name>
</gene>
<protein>
    <recommendedName>
        <fullName evidence="1">Aspartate carbamoyltransferase catalytic subunit</fullName>
        <ecNumber evidence="1">2.1.3.2</ecNumber>
    </recommendedName>
    <alternativeName>
        <fullName evidence="1">Aspartate transcarbamylase</fullName>
        <shortName evidence="1">ATCase</shortName>
    </alternativeName>
</protein>
<evidence type="ECO:0000255" key="1">
    <source>
        <dbReference type="HAMAP-Rule" id="MF_00001"/>
    </source>
</evidence>
<organism>
    <name type="scientific">Pseudomonas putida (strain ATCC 47054 / DSM 6125 / CFBP 8728 / NCIMB 11950 / KT2440)</name>
    <dbReference type="NCBI Taxonomy" id="160488"/>
    <lineage>
        <taxon>Bacteria</taxon>
        <taxon>Pseudomonadati</taxon>
        <taxon>Pseudomonadota</taxon>
        <taxon>Gammaproteobacteria</taxon>
        <taxon>Pseudomonadales</taxon>
        <taxon>Pseudomonadaceae</taxon>
        <taxon>Pseudomonas</taxon>
    </lineage>
</organism>
<name>PYRB_PSEPK</name>
<feature type="chain" id="PRO_0000113179" description="Aspartate carbamoyltransferase catalytic subunit">
    <location>
        <begin position="1"/>
        <end position="334"/>
    </location>
</feature>
<feature type="binding site" evidence="1">
    <location>
        <position position="71"/>
    </location>
    <ligand>
        <name>carbamoyl phosphate</name>
        <dbReference type="ChEBI" id="CHEBI:58228"/>
    </ligand>
</feature>
<feature type="binding site" evidence="1">
    <location>
        <position position="72"/>
    </location>
    <ligand>
        <name>carbamoyl phosphate</name>
        <dbReference type="ChEBI" id="CHEBI:58228"/>
    </ligand>
</feature>
<feature type="binding site" evidence="1">
    <location>
        <position position="99"/>
    </location>
    <ligand>
        <name>L-aspartate</name>
        <dbReference type="ChEBI" id="CHEBI:29991"/>
    </ligand>
</feature>
<feature type="binding site" evidence="1">
    <location>
        <position position="121"/>
    </location>
    <ligand>
        <name>carbamoyl phosphate</name>
        <dbReference type="ChEBI" id="CHEBI:58228"/>
    </ligand>
</feature>
<feature type="binding site" evidence="1">
    <location>
        <position position="151"/>
    </location>
    <ligand>
        <name>carbamoyl phosphate</name>
        <dbReference type="ChEBI" id="CHEBI:58228"/>
    </ligand>
</feature>
<feature type="binding site" evidence="1">
    <location>
        <position position="154"/>
    </location>
    <ligand>
        <name>carbamoyl phosphate</name>
        <dbReference type="ChEBI" id="CHEBI:58228"/>
    </ligand>
</feature>
<feature type="binding site" evidence="1">
    <location>
        <position position="184"/>
    </location>
    <ligand>
        <name>L-aspartate</name>
        <dbReference type="ChEBI" id="CHEBI:29991"/>
    </ligand>
</feature>
<feature type="binding site" evidence="1">
    <location>
        <position position="239"/>
    </location>
    <ligand>
        <name>L-aspartate</name>
        <dbReference type="ChEBI" id="CHEBI:29991"/>
    </ligand>
</feature>
<feature type="binding site" evidence="1">
    <location>
        <position position="280"/>
    </location>
    <ligand>
        <name>carbamoyl phosphate</name>
        <dbReference type="ChEBI" id="CHEBI:58228"/>
    </ligand>
</feature>
<feature type="binding site" evidence="1">
    <location>
        <position position="281"/>
    </location>
    <ligand>
        <name>carbamoyl phosphate</name>
        <dbReference type="ChEBI" id="CHEBI:58228"/>
    </ligand>
</feature>